<sequence>MLLLPLSVLLLLTQPWRSLGAEMKIYSQKTMANACTLVMCSPPEDGLPGRDGRDGREGPRGEKGDPGSPGPAGRAGMPGPAGPIGLKGDNGSAGEPGPKGDTGPPGPPGMPGPAGREGPSGKQGSMGPPGTPGPKGDTGPKGGVGAPGIQGSPGPAGLKGERGAPGEPGAPGRAGAPGPAGAIGPQGPSGARGPPGLKGDRGTPGERGAKGESGLAEVNALRQRVGILEGQLQRLQNAFSQYKKAMLFPNGRSVGEKIFKTEGSEKTFQDAQQICTQAGGQLPSPRSAAENEALTQLATAQNKAAFLSMSDTRKEGTFIYPTGEPLVYSNWAPQEPNNDGGSENCVEIFPNGKWNDKVCGEQRLVICEF</sequence>
<protein>
    <recommendedName>
        <fullName>Pulmonary surfactant-associated protein D</fullName>
        <shortName>PSP-D</shortName>
        <shortName>SP-D</shortName>
    </recommendedName>
    <alternativeName>
        <fullName>Lung surfactant protein D</fullName>
    </alternativeName>
</protein>
<feature type="signal peptide" evidence="1">
    <location>
        <begin position="1"/>
        <end position="20"/>
    </location>
</feature>
<feature type="chain" id="PRO_0000017464" description="Pulmonary surfactant-associated protein D">
    <location>
        <begin position="21"/>
        <end position="369"/>
    </location>
</feature>
<feature type="domain" description="Collagen-like">
    <location>
        <begin position="46"/>
        <end position="216"/>
    </location>
</feature>
<feature type="domain" description="C-type lectin" evidence="4">
    <location>
        <begin position="254"/>
        <end position="369"/>
    </location>
</feature>
<feature type="region of interest" description="Disordered" evidence="5">
    <location>
        <begin position="41"/>
        <end position="215"/>
    </location>
</feature>
<feature type="coiled-coil region" evidence="3">
    <location>
        <begin position="217"/>
        <end position="248"/>
    </location>
</feature>
<feature type="compositionally biased region" description="Basic and acidic residues" evidence="5">
    <location>
        <begin position="47"/>
        <end position="65"/>
    </location>
</feature>
<feature type="compositionally biased region" description="Gly residues" evidence="5">
    <location>
        <begin position="139"/>
        <end position="148"/>
    </location>
</feature>
<feature type="compositionally biased region" description="Low complexity" evidence="5">
    <location>
        <begin position="165"/>
        <end position="191"/>
    </location>
</feature>
<feature type="compositionally biased region" description="Basic and acidic residues" evidence="5">
    <location>
        <begin position="198"/>
        <end position="210"/>
    </location>
</feature>
<feature type="modified residue" description="S-nitrosocysteine" evidence="2">
    <location>
        <position position="35"/>
    </location>
</feature>
<feature type="modified residue" description="S-nitrosocysteine" evidence="2">
    <location>
        <position position="40"/>
    </location>
</feature>
<feature type="modified residue" description="4-hydroxyproline" evidence="1">
    <location>
        <position position="78"/>
    </location>
</feature>
<feature type="modified residue" description="5-hydroxylysine" evidence="1">
    <location>
        <position position="87"/>
    </location>
</feature>
<feature type="modified residue" description="4-hydroxyproline" evidence="1">
    <location>
        <position position="96"/>
    </location>
</feature>
<feature type="modified residue" description="5-hydroxylysine" evidence="1">
    <location>
        <position position="99"/>
    </location>
</feature>
<feature type="modified residue" description="4-hydroxyproline" evidence="1">
    <location>
        <position position="165"/>
    </location>
</feature>
<feature type="modified residue" description="4-hydroxyproline" evidence="1">
    <location>
        <position position="171"/>
    </location>
</feature>
<feature type="glycosylation site" description="N-linked (GlcNAc...) asparagine" evidence="3">
    <location>
        <position position="90"/>
    </location>
</feature>
<feature type="disulfide bond" evidence="4">
    <location>
        <begin position="275"/>
        <end position="367"/>
    </location>
</feature>
<feature type="disulfide bond" evidence="4">
    <location>
        <begin position="345"/>
        <end position="359"/>
    </location>
</feature>
<feature type="sequence conflict" description="In Ref. 1; CAA53510." evidence="6" ref="1">
    <original>E</original>
    <variation>V</variation>
    <location>
        <position position="262"/>
    </location>
</feature>
<feature type="sequence conflict" description="In Ref. 1; CAA53510." evidence="6" ref="1">
    <original>A</original>
    <variation>G</variation>
    <location>
        <position position="288"/>
    </location>
</feature>
<comment type="function">
    <text>Contributes to the lung's defense against inhaled microorganisms, organic antigens and toxins. Interacts with compounds such as bacterial lipopolysaccharides, oligosaccharides and fatty acids and modulates leukocyte action in immune response. May participate in the extracellular reorganization or turnover of pulmonary surfactant. Binds strongly maltose residues and to a lesser extent other alpha-glucosyl moieties.</text>
</comment>
<comment type="subunit">
    <text>Oligomeric complex of 4 set of homotrimers.</text>
</comment>
<comment type="subcellular location">
    <subcellularLocation>
        <location>Secreted</location>
        <location>Extracellular space</location>
        <location>Extracellular matrix</location>
    </subcellularLocation>
    <subcellularLocation>
        <location>Secreted</location>
        <location>Extracellular space</location>
        <location>Surface film</location>
    </subcellularLocation>
</comment>
<comment type="PTM">
    <text evidence="1">Hydroxylation on proline residues within the sequence motif, GXPG, is most likely to be 4-hydroxy as this fits the requirement for 4-hydroxylation in vertebrates.</text>
</comment>
<comment type="PTM">
    <text evidence="1">S-nitrosylation at Cys-35 and Cys-40 alters the quaternary structure which results in a pro-inflammatory chemoattractive signaling activity with macrophages.</text>
</comment>
<comment type="miscellaneous">
    <text>Pulmonary surfactant consists of 90% lipid and 10% protein. There are 4 surfactant-associated proteins: 2 collagenous, carbohydrate-binding glycoproteins (SP-A and SP-D) and 2 small hydrophobic proteins (SP-B and SP-C).</text>
</comment>
<comment type="similarity">
    <text evidence="6">Belongs to the SFTPD family.</text>
</comment>
<proteinExistence type="evidence at protein level"/>
<accession>P35246</accession>
<accession>Q863A1</accession>
<keyword id="KW-0106">Calcium</keyword>
<keyword id="KW-0175">Coiled coil</keyword>
<keyword id="KW-0176">Collagen</keyword>
<keyword id="KW-0903">Direct protein sequencing</keyword>
<keyword id="KW-1015">Disulfide bond</keyword>
<keyword id="KW-0272">Extracellular matrix</keyword>
<keyword id="KW-0305">Gaseous exchange</keyword>
<keyword id="KW-0325">Glycoprotein</keyword>
<keyword id="KW-0379">Hydroxylation</keyword>
<keyword id="KW-0391">Immunity</keyword>
<keyword id="KW-0399">Innate immunity</keyword>
<keyword id="KW-0430">Lectin</keyword>
<keyword id="KW-1185">Reference proteome</keyword>
<keyword id="KW-0677">Repeat</keyword>
<keyword id="KW-0702">S-nitrosylation</keyword>
<keyword id="KW-0964">Secreted</keyword>
<keyword id="KW-0732">Signal</keyword>
<keyword id="KW-0767">Surface film</keyword>
<gene>
    <name type="primary">SFTPD</name>
    <name type="synonym">SFTP4</name>
</gene>
<organism>
    <name type="scientific">Bos taurus</name>
    <name type="common">Bovine</name>
    <dbReference type="NCBI Taxonomy" id="9913"/>
    <lineage>
        <taxon>Eukaryota</taxon>
        <taxon>Metazoa</taxon>
        <taxon>Chordata</taxon>
        <taxon>Craniata</taxon>
        <taxon>Vertebrata</taxon>
        <taxon>Euteleostomi</taxon>
        <taxon>Mammalia</taxon>
        <taxon>Eutheria</taxon>
        <taxon>Laurasiatheria</taxon>
        <taxon>Artiodactyla</taxon>
        <taxon>Ruminantia</taxon>
        <taxon>Pecora</taxon>
        <taxon>Bovidae</taxon>
        <taxon>Bovinae</taxon>
        <taxon>Bos</taxon>
    </lineage>
</organism>
<reference key="1">
    <citation type="journal article" date="1993" name="Immunology">
        <title>Structural similarity between bovine conglutinin and bovine lung surfactant protein D and demonstration of liver as a site of synthesis of conglutinin.</title>
        <authorList>
            <person name="Lim B.L."/>
            <person name="Lu J."/>
            <person name="Reid K.B.M."/>
        </authorList>
    </citation>
    <scope>NUCLEOTIDE SEQUENCE [MRNA]</scope>
    <scope>PROTEIN SEQUENCE OF 208-247</scope>
    <source>
        <tissue>Lung</tissue>
    </source>
</reference>
<reference key="2">
    <citation type="submission" date="2003-03" db="EMBL/GenBank/DDBJ databases">
        <title>Bovine surfactant protein D: genomic characterization, chromosomal localization and expression analysis.</title>
        <authorList>
            <person name="Gjerstorff M."/>
            <person name="Hansen S."/>
            <person name="Madsen J."/>
            <person name="Bendixen C."/>
            <person name="Holmskov U."/>
        </authorList>
    </citation>
    <scope>NUCLEOTIDE SEQUENCE [GENOMIC DNA]</scope>
</reference>
<evidence type="ECO:0000250" key="1"/>
<evidence type="ECO:0000250" key="2">
    <source>
        <dbReference type="UniProtKB" id="P35248"/>
    </source>
</evidence>
<evidence type="ECO:0000255" key="3"/>
<evidence type="ECO:0000255" key="4">
    <source>
        <dbReference type="PROSITE-ProRule" id="PRU00040"/>
    </source>
</evidence>
<evidence type="ECO:0000256" key="5">
    <source>
        <dbReference type="SAM" id="MobiDB-lite"/>
    </source>
</evidence>
<evidence type="ECO:0000305" key="6"/>
<dbReference type="EMBL" id="X75911">
    <property type="protein sequence ID" value="CAA53510.1"/>
    <property type="molecule type" value="mRNA"/>
</dbReference>
<dbReference type="EMBL" id="AJ548848">
    <property type="protein sequence ID" value="CAD69922.1"/>
    <property type="molecule type" value="Genomic_DNA"/>
</dbReference>
<dbReference type="EMBL" id="AJ548849">
    <property type="protein sequence ID" value="CAD69922.1"/>
    <property type="status" value="JOINED"/>
    <property type="molecule type" value="Genomic_DNA"/>
</dbReference>
<dbReference type="EMBL" id="AJ548850">
    <property type="protein sequence ID" value="CAD69922.1"/>
    <property type="status" value="JOINED"/>
    <property type="molecule type" value="Genomic_DNA"/>
</dbReference>
<dbReference type="PIR" id="S33603">
    <property type="entry name" value="S33603"/>
</dbReference>
<dbReference type="RefSeq" id="NP_851369.1">
    <property type="nucleotide sequence ID" value="NM_181026.2"/>
</dbReference>
<dbReference type="SMR" id="P35246"/>
<dbReference type="BioGRID" id="159354">
    <property type="interactions" value="2"/>
</dbReference>
<dbReference type="FunCoup" id="P35246">
    <property type="interactions" value="251"/>
</dbReference>
<dbReference type="STRING" id="9913.ENSBTAP00000008579"/>
<dbReference type="GlyCosmos" id="P35246">
    <property type="glycosylation" value="1 site, No reported glycans"/>
</dbReference>
<dbReference type="GlyGen" id="P35246">
    <property type="glycosylation" value="1 site"/>
</dbReference>
<dbReference type="PaxDb" id="9913-ENSBTAP00000008579"/>
<dbReference type="Ensembl" id="ENSBTAT00000008579.7">
    <property type="protein sequence ID" value="ENSBTAP00000008579.5"/>
    <property type="gene ID" value="ENSBTAG00000046421.3"/>
</dbReference>
<dbReference type="GeneID" id="282072"/>
<dbReference type="KEGG" id="bta:282072"/>
<dbReference type="CTD" id="6441"/>
<dbReference type="VEuPathDB" id="HostDB:ENSBTAG00000046421"/>
<dbReference type="eggNOG" id="KOG4297">
    <property type="taxonomic scope" value="Eukaryota"/>
</dbReference>
<dbReference type="GeneTree" id="ENSGT00940000155748"/>
<dbReference type="HOGENOM" id="CLU_049894_3_0_1"/>
<dbReference type="InParanoid" id="P35246"/>
<dbReference type="OMA" id="YQKVATF"/>
<dbReference type="OrthoDB" id="10255512at2759"/>
<dbReference type="TreeFam" id="TF330481"/>
<dbReference type="Reactome" id="R-BTA-166016">
    <property type="pathway name" value="Toll Like Receptor 4 (TLR4) Cascade"/>
</dbReference>
<dbReference type="Reactome" id="R-BTA-198933">
    <property type="pathway name" value="Immunoregulatory interactions between a Lymphoid and a non-Lymphoid cell"/>
</dbReference>
<dbReference type="Reactome" id="R-BTA-391160">
    <property type="pathway name" value="Signal regulatory protein family interactions"/>
</dbReference>
<dbReference type="Reactome" id="R-BTA-5683826">
    <property type="pathway name" value="Surfactant metabolism"/>
</dbReference>
<dbReference type="Reactome" id="R-BTA-5686938">
    <property type="pathway name" value="Regulation of TLR by endogenous ligand"/>
</dbReference>
<dbReference type="Proteomes" id="UP000009136">
    <property type="component" value="Chromosome 28"/>
</dbReference>
<dbReference type="Bgee" id="ENSBTAG00000046421">
    <property type="expression patterns" value="Expressed in lung and 35 other cell types or tissues"/>
</dbReference>
<dbReference type="GO" id="GO:0005581">
    <property type="term" value="C:collagen trimer"/>
    <property type="evidence" value="ECO:0007669"/>
    <property type="project" value="UniProtKB-KW"/>
</dbReference>
<dbReference type="GO" id="GO:0005615">
    <property type="term" value="C:extracellular space"/>
    <property type="evidence" value="ECO:0000318"/>
    <property type="project" value="GO_Central"/>
</dbReference>
<dbReference type="GO" id="GO:0005771">
    <property type="term" value="C:multivesicular body"/>
    <property type="evidence" value="ECO:0000318"/>
    <property type="project" value="GO_Central"/>
</dbReference>
<dbReference type="GO" id="GO:0030246">
    <property type="term" value="F:carbohydrate binding"/>
    <property type="evidence" value="ECO:0007669"/>
    <property type="project" value="UniProtKB-KW"/>
</dbReference>
<dbReference type="GO" id="GO:0045087">
    <property type="term" value="P:innate immune response"/>
    <property type="evidence" value="ECO:0007669"/>
    <property type="project" value="UniProtKB-KW"/>
</dbReference>
<dbReference type="GO" id="GO:0048286">
    <property type="term" value="P:lung alveolus development"/>
    <property type="evidence" value="ECO:0000250"/>
    <property type="project" value="UniProtKB"/>
</dbReference>
<dbReference type="GO" id="GO:0050766">
    <property type="term" value="P:positive regulation of phagocytosis"/>
    <property type="evidence" value="ECO:0000318"/>
    <property type="project" value="GO_Central"/>
</dbReference>
<dbReference type="GO" id="GO:0007585">
    <property type="term" value="P:respiratory gaseous exchange by respiratory system"/>
    <property type="evidence" value="ECO:0007669"/>
    <property type="project" value="UniProtKB-KW"/>
</dbReference>
<dbReference type="GO" id="GO:0043129">
    <property type="term" value="P:surfactant homeostasis"/>
    <property type="evidence" value="ECO:0000250"/>
    <property type="project" value="UniProtKB"/>
</dbReference>
<dbReference type="FunFam" id="1.20.5.360:FF:000001">
    <property type="entry name" value="Pulmonary surfactant-associated protein D"/>
    <property type="match status" value="1"/>
</dbReference>
<dbReference type="FunFam" id="3.10.100.10:FF:000045">
    <property type="entry name" value="Pulmonary surfactant-associated protein D"/>
    <property type="match status" value="1"/>
</dbReference>
<dbReference type="Gene3D" id="3.10.100.10">
    <property type="entry name" value="Mannose-Binding Protein A, subunit A"/>
    <property type="match status" value="1"/>
</dbReference>
<dbReference type="Gene3D" id="1.20.5.360">
    <property type="entry name" value="SFTPD helical domain"/>
    <property type="match status" value="1"/>
</dbReference>
<dbReference type="InterPro" id="IPR001304">
    <property type="entry name" value="C-type_lectin-like"/>
</dbReference>
<dbReference type="InterPro" id="IPR016186">
    <property type="entry name" value="C-type_lectin-like/link_sf"/>
</dbReference>
<dbReference type="InterPro" id="IPR018378">
    <property type="entry name" value="C-type_lectin_CS"/>
</dbReference>
<dbReference type="InterPro" id="IPR051077">
    <property type="entry name" value="Ca-dependent_lectin"/>
</dbReference>
<dbReference type="InterPro" id="IPR008160">
    <property type="entry name" value="Collagen"/>
</dbReference>
<dbReference type="InterPro" id="IPR016187">
    <property type="entry name" value="CTDL_fold"/>
</dbReference>
<dbReference type="InterPro" id="IPR015097">
    <property type="entry name" value="Surfac_D-trimer"/>
</dbReference>
<dbReference type="PANTHER" id="PTHR24024">
    <property type="entry name" value="PULMONARY SURFACTANT-ASSOCIATED PROTEIN A"/>
    <property type="match status" value="1"/>
</dbReference>
<dbReference type="PANTHER" id="PTHR24024:SF15">
    <property type="entry name" value="PULMONARY SURFACTANT-ASSOCIATED PROTEIN D"/>
    <property type="match status" value="1"/>
</dbReference>
<dbReference type="Pfam" id="PF01391">
    <property type="entry name" value="Collagen"/>
    <property type="match status" value="2"/>
</dbReference>
<dbReference type="Pfam" id="PF00059">
    <property type="entry name" value="Lectin_C"/>
    <property type="match status" value="1"/>
</dbReference>
<dbReference type="Pfam" id="PF09006">
    <property type="entry name" value="Surfac_D-trimer"/>
    <property type="match status" value="1"/>
</dbReference>
<dbReference type="SMART" id="SM00034">
    <property type="entry name" value="CLECT"/>
    <property type="match status" value="1"/>
</dbReference>
<dbReference type="SUPFAM" id="SSF56436">
    <property type="entry name" value="C-type lectin-like"/>
    <property type="match status" value="1"/>
</dbReference>
<dbReference type="SUPFAM" id="SSF57944">
    <property type="entry name" value="Triple coiled coil domain of C-type lectins"/>
    <property type="match status" value="1"/>
</dbReference>
<dbReference type="PROSITE" id="PS00615">
    <property type="entry name" value="C_TYPE_LECTIN_1"/>
    <property type="match status" value="1"/>
</dbReference>
<dbReference type="PROSITE" id="PS50041">
    <property type="entry name" value="C_TYPE_LECTIN_2"/>
    <property type="match status" value="1"/>
</dbReference>
<name>SFTPD_BOVIN</name>